<sequence length="397" mass="44764">MALRVTRNTRLASSENQGALPGKAAVANKPGLRPRAALGEIGNNPQTRQALRKKEVKVAPKVEAVAEKAPVVQQPKKESPKVQHDVQILSEPSSPVPMETSGCASDDLCQAFSDVMLNIKDVDADDYDNPMLCSEYVKDIYLYLRQLEIEQAVRPKYLEGSEVTGNMRAILIDWLVQVQIKFKLLQETMYMTVAVIDRFLQDHPVPKKQLQLVGVTAMFIASKYEEMYPPEIADFAFVTDRAYTTGQIRDMEMKILRVLDFSFGKPLPLQFLRRASKIGDVTAEHHTLAKYFLELTMVDYDMVHFPPSQVASARYALTLKVFNCGDWTPTLQHYMGYTEDSLVPVMQHIARNVVRVNEGLSKHLAVKNKYSSQKQMRIASISQLKSSLIKDLAKQIS</sequence>
<keyword id="KW-0131">Cell cycle</keyword>
<keyword id="KW-0132">Cell division</keyword>
<keyword id="KW-0195">Cyclin</keyword>
<keyword id="KW-0498">Mitosis</keyword>
<keyword id="KW-1185">Reference proteome</keyword>
<accession>Q92162</accession>
<gene>
    <name type="primary">ccnb1</name>
</gene>
<feature type="chain" id="PRO_0000080379" description="G2/mitotic-specific cyclin-B1">
    <location>
        <begin position="1"/>
        <end position="397"/>
    </location>
</feature>
<feature type="region of interest" description="Disordered" evidence="1">
    <location>
        <begin position="1"/>
        <end position="30"/>
    </location>
</feature>
<feature type="compositionally biased region" description="Polar residues" evidence="1">
    <location>
        <begin position="1"/>
        <end position="17"/>
    </location>
</feature>
<organism>
    <name type="scientific">Carassius auratus</name>
    <name type="common">Goldfish</name>
    <dbReference type="NCBI Taxonomy" id="7957"/>
    <lineage>
        <taxon>Eukaryota</taxon>
        <taxon>Metazoa</taxon>
        <taxon>Chordata</taxon>
        <taxon>Craniata</taxon>
        <taxon>Vertebrata</taxon>
        <taxon>Euteleostomi</taxon>
        <taxon>Actinopterygii</taxon>
        <taxon>Neopterygii</taxon>
        <taxon>Teleostei</taxon>
        <taxon>Ostariophysi</taxon>
        <taxon>Cypriniformes</taxon>
        <taxon>Cyprinidae</taxon>
        <taxon>Cyprininae</taxon>
        <taxon>Carassius</taxon>
    </lineage>
</organism>
<dbReference type="EMBL" id="S48758">
    <property type="protein sequence ID" value="AAB24163.1"/>
    <property type="molecule type" value="mRNA"/>
</dbReference>
<dbReference type="SMR" id="Q92162"/>
<dbReference type="Proteomes" id="UP000515129">
    <property type="component" value="Unplaced"/>
</dbReference>
<dbReference type="GO" id="GO:0016538">
    <property type="term" value="F:cyclin-dependent protein serine/threonine kinase regulator activity"/>
    <property type="evidence" value="ECO:0007669"/>
    <property type="project" value="InterPro"/>
</dbReference>
<dbReference type="GO" id="GO:0051301">
    <property type="term" value="P:cell division"/>
    <property type="evidence" value="ECO:0007669"/>
    <property type="project" value="UniProtKB-KW"/>
</dbReference>
<dbReference type="GO" id="GO:0044772">
    <property type="term" value="P:mitotic cell cycle phase transition"/>
    <property type="evidence" value="ECO:0007669"/>
    <property type="project" value="InterPro"/>
</dbReference>
<dbReference type="CDD" id="cd20565">
    <property type="entry name" value="CYCLIN_CCNB1_rpt1"/>
    <property type="match status" value="1"/>
</dbReference>
<dbReference type="CDD" id="cd20569">
    <property type="entry name" value="CYCLIN_CCNB1_rpt2"/>
    <property type="match status" value="1"/>
</dbReference>
<dbReference type="FunFam" id="1.10.472.10:FF:000198">
    <property type="entry name" value="G2/mitotic-specific cyclin-B1"/>
    <property type="match status" value="1"/>
</dbReference>
<dbReference type="Gene3D" id="1.10.472.10">
    <property type="entry name" value="Cyclin-like"/>
    <property type="match status" value="2"/>
</dbReference>
<dbReference type="InterPro" id="IPR048026">
    <property type="entry name" value="CCNB1_first_cyclin-box"/>
</dbReference>
<dbReference type="InterPro" id="IPR039361">
    <property type="entry name" value="Cyclin"/>
</dbReference>
<dbReference type="InterPro" id="IPR013763">
    <property type="entry name" value="Cyclin-like_dom"/>
</dbReference>
<dbReference type="InterPro" id="IPR036915">
    <property type="entry name" value="Cyclin-like_sf"/>
</dbReference>
<dbReference type="InterPro" id="IPR046965">
    <property type="entry name" value="Cyclin_A/B-like"/>
</dbReference>
<dbReference type="InterPro" id="IPR004367">
    <property type="entry name" value="Cyclin_C-dom"/>
</dbReference>
<dbReference type="InterPro" id="IPR006671">
    <property type="entry name" value="Cyclin_N"/>
</dbReference>
<dbReference type="InterPro" id="IPR048258">
    <property type="entry name" value="Cyclins_cyclin-box"/>
</dbReference>
<dbReference type="PANTHER" id="PTHR10177">
    <property type="entry name" value="CYCLINS"/>
    <property type="match status" value="1"/>
</dbReference>
<dbReference type="Pfam" id="PF02984">
    <property type="entry name" value="Cyclin_C"/>
    <property type="match status" value="1"/>
</dbReference>
<dbReference type="Pfam" id="PF00134">
    <property type="entry name" value="Cyclin_N"/>
    <property type="match status" value="1"/>
</dbReference>
<dbReference type="PIRSF" id="PIRSF001771">
    <property type="entry name" value="Cyclin_A_B_D_E"/>
    <property type="match status" value="1"/>
</dbReference>
<dbReference type="SMART" id="SM00385">
    <property type="entry name" value="CYCLIN"/>
    <property type="match status" value="2"/>
</dbReference>
<dbReference type="SMART" id="SM01332">
    <property type="entry name" value="Cyclin_C"/>
    <property type="match status" value="1"/>
</dbReference>
<dbReference type="SUPFAM" id="SSF47954">
    <property type="entry name" value="Cyclin-like"/>
    <property type="match status" value="2"/>
</dbReference>
<dbReference type="PROSITE" id="PS00292">
    <property type="entry name" value="CYCLINS"/>
    <property type="match status" value="1"/>
</dbReference>
<name>CCNB1_CARAU</name>
<comment type="function">
    <text>Essential for the control of the cell cycle at the G2/M (mitosis) transition.</text>
</comment>
<comment type="subunit">
    <text>Interacts with the CDK1 protein kinase to form a serine/threonine kinase holoenzyme complex also known as maturation promoting factor (MPF). The cyclin subunit imparts substrate specificity to the complex.</text>
</comment>
<comment type="developmental stage">
    <text>Accumulates steadily during G2 and is abruptly destroyed at mitosis.</text>
</comment>
<comment type="similarity">
    <text evidence="2">Belongs to the cyclin family. Cyclin AB subfamily.</text>
</comment>
<reference key="1">
    <citation type="journal article" date="1992" name="Mol. Reprod. Dev.">
        <title>Cyclin B in fish oocytes: its cDNA and amino acid sequences, appearance during maturation, and induction of p34cdc2 activation.</title>
        <authorList>
            <person name="Hirai T."/>
            <person name="Yamashita M."/>
            <person name="Yoshikuni M."/>
            <person name="Lou Y.H."/>
            <person name="Nagahama Y."/>
        </authorList>
    </citation>
    <scope>NUCLEOTIDE SEQUENCE [MRNA]</scope>
    <source>
        <tissue>Oocyte</tissue>
    </source>
</reference>
<evidence type="ECO:0000256" key="1">
    <source>
        <dbReference type="SAM" id="MobiDB-lite"/>
    </source>
</evidence>
<evidence type="ECO:0000305" key="2"/>
<protein>
    <recommendedName>
        <fullName>G2/mitotic-specific cyclin-B1</fullName>
    </recommendedName>
</protein>
<proteinExistence type="evidence at transcript level"/>